<organism>
    <name type="scientific">Chloroherpeton thalassium (strain ATCC 35110 / GB-78)</name>
    <dbReference type="NCBI Taxonomy" id="517418"/>
    <lineage>
        <taxon>Bacteria</taxon>
        <taxon>Pseudomonadati</taxon>
        <taxon>Chlorobiota</taxon>
        <taxon>Chlorobiia</taxon>
        <taxon>Chlorobiales</taxon>
        <taxon>Chloroherpetonaceae</taxon>
        <taxon>Chloroherpeton</taxon>
    </lineage>
</organism>
<feature type="chain" id="PRO_1000093439" description="Peptide chain release factor 1">
    <location>
        <begin position="1"/>
        <end position="358"/>
    </location>
</feature>
<feature type="modified residue" description="N5-methylglutamine" evidence="1">
    <location>
        <position position="234"/>
    </location>
</feature>
<reference key="1">
    <citation type="submission" date="2008-06" db="EMBL/GenBank/DDBJ databases">
        <title>Complete sequence of Chloroherpeton thalassium ATCC 35110.</title>
        <authorList>
            <consortium name="US DOE Joint Genome Institute"/>
            <person name="Lucas S."/>
            <person name="Copeland A."/>
            <person name="Lapidus A."/>
            <person name="Glavina del Rio T."/>
            <person name="Dalin E."/>
            <person name="Tice H."/>
            <person name="Bruce D."/>
            <person name="Goodwin L."/>
            <person name="Pitluck S."/>
            <person name="Schmutz J."/>
            <person name="Larimer F."/>
            <person name="Land M."/>
            <person name="Hauser L."/>
            <person name="Kyrpides N."/>
            <person name="Mikhailova N."/>
            <person name="Liu Z."/>
            <person name="Li T."/>
            <person name="Zhao F."/>
            <person name="Overmann J."/>
            <person name="Bryant D.A."/>
            <person name="Richardson P."/>
        </authorList>
    </citation>
    <scope>NUCLEOTIDE SEQUENCE [LARGE SCALE GENOMIC DNA]</scope>
    <source>
        <strain>ATCC 35110 / GB-78</strain>
    </source>
</reference>
<accession>B3QYI4</accession>
<name>RF1_CHLT3</name>
<dbReference type="EMBL" id="CP001100">
    <property type="protein sequence ID" value="ACF13612.1"/>
    <property type="molecule type" value="Genomic_DNA"/>
</dbReference>
<dbReference type="RefSeq" id="WP_012499696.1">
    <property type="nucleotide sequence ID" value="NC_011026.1"/>
</dbReference>
<dbReference type="SMR" id="B3QYI4"/>
<dbReference type="STRING" id="517418.Ctha_1148"/>
<dbReference type="KEGG" id="cts:Ctha_1148"/>
<dbReference type="eggNOG" id="COG0216">
    <property type="taxonomic scope" value="Bacteria"/>
</dbReference>
<dbReference type="HOGENOM" id="CLU_036856_0_1_10"/>
<dbReference type="OrthoDB" id="9806673at2"/>
<dbReference type="Proteomes" id="UP000001208">
    <property type="component" value="Chromosome"/>
</dbReference>
<dbReference type="GO" id="GO:0005737">
    <property type="term" value="C:cytoplasm"/>
    <property type="evidence" value="ECO:0007669"/>
    <property type="project" value="UniProtKB-SubCell"/>
</dbReference>
<dbReference type="GO" id="GO:0016149">
    <property type="term" value="F:translation release factor activity, codon specific"/>
    <property type="evidence" value="ECO:0007669"/>
    <property type="project" value="UniProtKB-UniRule"/>
</dbReference>
<dbReference type="FunFam" id="3.30.160.20:FF:000004">
    <property type="entry name" value="Peptide chain release factor 1"/>
    <property type="match status" value="1"/>
</dbReference>
<dbReference type="FunFam" id="3.30.70.1660:FF:000002">
    <property type="entry name" value="Peptide chain release factor 1"/>
    <property type="match status" value="1"/>
</dbReference>
<dbReference type="Gene3D" id="3.30.160.20">
    <property type="match status" value="1"/>
</dbReference>
<dbReference type="Gene3D" id="3.30.70.1660">
    <property type="match status" value="1"/>
</dbReference>
<dbReference type="Gene3D" id="6.10.140.1950">
    <property type="match status" value="1"/>
</dbReference>
<dbReference type="HAMAP" id="MF_00093">
    <property type="entry name" value="Rel_fac_1"/>
    <property type="match status" value="1"/>
</dbReference>
<dbReference type="InterPro" id="IPR005139">
    <property type="entry name" value="PCRF"/>
</dbReference>
<dbReference type="InterPro" id="IPR000352">
    <property type="entry name" value="Pep_chain_release_fac_I"/>
</dbReference>
<dbReference type="InterPro" id="IPR045853">
    <property type="entry name" value="Pep_chain_release_fac_I_sf"/>
</dbReference>
<dbReference type="InterPro" id="IPR050057">
    <property type="entry name" value="Prokaryotic/Mito_RF"/>
</dbReference>
<dbReference type="InterPro" id="IPR004373">
    <property type="entry name" value="RF-1"/>
</dbReference>
<dbReference type="NCBIfam" id="TIGR00019">
    <property type="entry name" value="prfA"/>
    <property type="match status" value="1"/>
</dbReference>
<dbReference type="NCBIfam" id="NF001859">
    <property type="entry name" value="PRK00591.1"/>
    <property type="match status" value="1"/>
</dbReference>
<dbReference type="PANTHER" id="PTHR43804">
    <property type="entry name" value="LD18447P"/>
    <property type="match status" value="1"/>
</dbReference>
<dbReference type="PANTHER" id="PTHR43804:SF7">
    <property type="entry name" value="LD18447P"/>
    <property type="match status" value="1"/>
</dbReference>
<dbReference type="Pfam" id="PF03462">
    <property type="entry name" value="PCRF"/>
    <property type="match status" value="1"/>
</dbReference>
<dbReference type="Pfam" id="PF00472">
    <property type="entry name" value="RF-1"/>
    <property type="match status" value="1"/>
</dbReference>
<dbReference type="SMART" id="SM00937">
    <property type="entry name" value="PCRF"/>
    <property type="match status" value="1"/>
</dbReference>
<dbReference type="SUPFAM" id="SSF75620">
    <property type="entry name" value="Release factor"/>
    <property type="match status" value="1"/>
</dbReference>
<dbReference type="PROSITE" id="PS00745">
    <property type="entry name" value="RF_PROK_I"/>
    <property type="match status" value="1"/>
</dbReference>
<keyword id="KW-0963">Cytoplasm</keyword>
<keyword id="KW-0488">Methylation</keyword>
<keyword id="KW-0648">Protein biosynthesis</keyword>
<keyword id="KW-1185">Reference proteome</keyword>
<proteinExistence type="inferred from homology"/>
<sequence>MFDQLQSIKDRYKEIEKQLSDPGVISNQDKFRQLNKEYSGLSEIVKAYDEYRKAKDALQQSKELLYTESDPEMKELAQADYDEYSEKVPELEQQLKILLLPKEEADSRNAMVEIRAGAGGDEAALFAADLLRMYQRFAERNGWKCEVLDYNESSGLGGFKEATISLSGDDVYGTMKFESGVHRVQRVPETETQGRVHTSAASVAVLPEAEDFDIEIRKEDLQMDTYRSGGKGGQNVNKVETAVRITHVPSGIVVACQEERSQLQNRERAMKMLRSKLYDIKLAEQQKERADLRRSMVSTGDRSAKIRTYNFPQSRVTDHRIGFTTHALPQLLDGDLFEIIEALRVHDQTERLKAQVGA</sequence>
<evidence type="ECO:0000255" key="1">
    <source>
        <dbReference type="HAMAP-Rule" id="MF_00093"/>
    </source>
</evidence>
<comment type="function">
    <text evidence="1">Peptide chain release factor 1 directs the termination of translation in response to the peptide chain termination codons UAG and UAA.</text>
</comment>
<comment type="subcellular location">
    <subcellularLocation>
        <location evidence="1">Cytoplasm</location>
    </subcellularLocation>
</comment>
<comment type="PTM">
    <text evidence="1">Methylated by PrmC. Methylation increases the termination efficiency of RF1.</text>
</comment>
<comment type="similarity">
    <text evidence="1">Belongs to the prokaryotic/mitochondrial release factor family.</text>
</comment>
<gene>
    <name evidence="1" type="primary">prfA</name>
    <name type="ordered locus">Ctha_1148</name>
</gene>
<protein>
    <recommendedName>
        <fullName evidence="1">Peptide chain release factor 1</fullName>
        <shortName evidence="1">RF-1</shortName>
    </recommendedName>
</protein>